<evidence type="ECO:0000255" key="1">
    <source>
        <dbReference type="HAMAP-Rule" id="MF_01040"/>
    </source>
</evidence>
<gene>
    <name evidence="1" type="primary">gpmB</name>
    <name type="ordered locus">ESA_03343</name>
</gene>
<organism>
    <name type="scientific">Cronobacter sakazakii (strain ATCC BAA-894)</name>
    <name type="common">Enterobacter sakazakii</name>
    <dbReference type="NCBI Taxonomy" id="290339"/>
    <lineage>
        <taxon>Bacteria</taxon>
        <taxon>Pseudomonadati</taxon>
        <taxon>Pseudomonadota</taxon>
        <taxon>Gammaproteobacteria</taxon>
        <taxon>Enterobacterales</taxon>
        <taxon>Enterobacteriaceae</taxon>
        <taxon>Cronobacter</taxon>
    </lineage>
</organism>
<proteinExistence type="inferred from homology"/>
<dbReference type="EC" id="5.4.2.-" evidence="1"/>
<dbReference type="EMBL" id="CP000783">
    <property type="protein sequence ID" value="ABU78564.1"/>
    <property type="molecule type" value="Genomic_DNA"/>
</dbReference>
<dbReference type="RefSeq" id="WP_004386285.1">
    <property type="nucleotide sequence ID" value="NC_009778.1"/>
</dbReference>
<dbReference type="SMR" id="A7MIJ0"/>
<dbReference type="GeneID" id="92807773"/>
<dbReference type="KEGG" id="esa:ESA_03343"/>
<dbReference type="HOGENOM" id="CLU_033323_9_5_6"/>
<dbReference type="UniPathway" id="UPA00109">
    <property type="reaction ID" value="UER00186"/>
</dbReference>
<dbReference type="Proteomes" id="UP000000260">
    <property type="component" value="Chromosome"/>
</dbReference>
<dbReference type="GO" id="GO:0005737">
    <property type="term" value="C:cytoplasm"/>
    <property type="evidence" value="ECO:0007669"/>
    <property type="project" value="TreeGrafter"/>
</dbReference>
<dbReference type="GO" id="GO:0016791">
    <property type="term" value="F:phosphatase activity"/>
    <property type="evidence" value="ECO:0007669"/>
    <property type="project" value="TreeGrafter"/>
</dbReference>
<dbReference type="GO" id="GO:0004619">
    <property type="term" value="F:phosphoglycerate mutase activity"/>
    <property type="evidence" value="ECO:0007669"/>
    <property type="project" value="UniProtKB-UniRule"/>
</dbReference>
<dbReference type="GO" id="GO:0006096">
    <property type="term" value="P:glycolytic process"/>
    <property type="evidence" value="ECO:0007669"/>
    <property type="project" value="UniProtKB-UniRule"/>
</dbReference>
<dbReference type="CDD" id="cd07067">
    <property type="entry name" value="HP_PGM_like"/>
    <property type="match status" value="1"/>
</dbReference>
<dbReference type="Gene3D" id="3.40.50.1240">
    <property type="entry name" value="Phosphoglycerate mutase-like"/>
    <property type="match status" value="1"/>
</dbReference>
<dbReference type="HAMAP" id="MF_01040">
    <property type="entry name" value="PGAM_GpmB"/>
    <property type="match status" value="1"/>
</dbReference>
<dbReference type="InterPro" id="IPR013078">
    <property type="entry name" value="His_Pase_superF_clade-1"/>
</dbReference>
<dbReference type="InterPro" id="IPR029033">
    <property type="entry name" value="His_PPase_superfam"/>
</dbReference>
<dbReference type="InterPro" id="IPR001345">
    <property type="entry name" value="PG/BPGM_mutase_AS"/>
</dbReference>
<dbReference type="InterPro" id="IPR050275">
    <property type="entry name" value="PGM_Phosphatase"/>
</dbReference>
<dbReference type="InterPro" id="IPR023086">
    <property type="entry name" value="Phosphoglycerate_mutase_GpmB"/>
</dbReference>
<dbReference type="NCBIfam" id="NF002901">
    <property type="entry name" value="PRK03482.1"/>
    <property type="match status" value="1"/>
</dbReference>
<dbReference type="PANTHER" id="PTHR48100">
    <property type="entry name" value="BROAD-SPECIFICITY PHOSPHATASE YOR283W-RELATED"/>
    <property type="match status" value="1"/>
</dbReference>
<dbReference type="PANTHER" id="PTHR48100:SF1">
    <property type="entry name" value="HISTIDINE PHOSPHATASE FAMILY PROTEIN-RELATED"/>
    <property type="match status" value="1"/>
</dbReference>
<dbReference type="Pfam" id="PF00300">
    <property type="entry name" value="His_Phos_1"/>
    <property type="match status" value="1"/>
</dbReference>
<dbReference type="SMART" id="SM00855">
    <property type="entry name" value="PGAM"/>
    <property type="match status" value="1"/>
</dbReference>
<dbReference type="SUPFAM" id="SSF53254">
    <property type="entry name" value="Phosphoglycerate mutase-like"/>
    <property type="match status" value="1"/>
</dbReference>
<dbReference type="PROSITE" id="PS00175">
    <property type="entry name" value="PG_MUTASE"/>
    <property type="match status" value="1"/>
</dbReference>
<keyword id="KW-0324">Glycolysis</keyword>
<keyword id="KW-0413">Isomerase</keyword>
<keyword id="KW-1185">Reference proteome</keyword>
<name>GPMB_CROS8</name>
<accession>A7MIJ0</accession>
<feature type="chain" id="PRO_1000064126" description="Probable phosphoglycerate mutase GpmB">
    <location>
        <begin position="1"/>
        <end position="215"/>
    </location>
</feature>
<feature type="active site" description="Tele-phosphohistidine intermediate" evidence="1">
    <location>
        <position position="9"/>
    </location>
</feature>
<feature type="active site" description="Proton donor/acceptor" evidence="1">
    <location>
        <position position="82"/>
    </location>
</feature>
<feature type="binding site" evidence="1">
    <location>
        <begin position="8"/>
        <end position="15"/>
    </location>
    <ligand>
        <name>substrate</name>
    </ligand>
</feature>
<feature type="binding site" evidence="1">
    <location>
        <begin position="21"/>
        <end position="22"/>
    </location>
    <ligand>
        <name>substrate</name>
    </ligand>
</feature>
<feature type="binding site" evidence="1">
    <location>
        <position position="58"/>
    </location>
    <ligand>
        <name>substrate</name>
    </ligand>
</feature>
<feature type="binding site" evidence="1">
    <location>
        <begin position="82"/>
        <end position="85"/>
    </location>
    <ligand>
        <name>substrate</name>
    </ligand>
</feature>
<feature type="binding site" evidence="1">
    <location>
        <begin position="104"/>
        <end position="105"/>
    </location>
    <ligand>
        <name>substrate</name>
    </ligand>
</feature>
<feature type="binding site" evidence="1">
    <location>
        <begin position="151"/>
        <end position="152"/>
    </location>
    <ligand>
        <name>substrate</name>
    </ligand>
</feature>
<feature type="site" description="Transition state stabilizer" evidence="1">
    <location>
        <position position="150"/>
    </location>
</feature>
<comment type="catalytic activity">
    <reaction evidence="1">
        <text>(2R)-2-phosphoglycerate = (2R)-3-phosphoglycerate</text>
        <dbReference type="Rhea" id="RHEA:15901"/>
        <dbReference type="ChEBI" id="CHEBI:58272"/>
        <dbReference type="ChEBI" id="CHEBI:58289"/>
    </reaction>
</comment>
<comment type="pathway">
    <text evidence="1">Carbohydrate degradation; glycolysis; pyruvate from D-glyceraldehyde 3-phosphate: step 3/5.</text>
</comment>
<comment type="similarity">
    <text evidence="1">Belongs to the phosphoglycerate mutase family. GpmB subfamily.</text>
</comment>
<reference key="1">
    <citation type="journal article" date="2010" name="PLoS ONE">
        <title>Genome sequence of Cronobacter sakazakii BAA-894 and comparative genomic hybridization analysis with other Cronobacter species.</title>
        <authorList>
            <person name="Kucerova E."/>
            <person name="Clifton S.W."/>
            <person name="Xia X.Q."/>
            <person name="Long F."/>
            <person name="Porwollik S."/>
            <person name="Fulton L."/>
            <person name="Fronick C."/>
            <person name="Minx P."/>
            <person name="Kyung K."/>
            <person name="Warren W."/>
            <person name="Fulton R."/>
            <person name="Feng D."/>
            <person name="Wollam A."/>
            <person name="Shah N."/>
            <person name="Bhonagiri V."/>
            <person name="Nash W.E."/>
            <person name="Hallsworth-Pepin K."/>
            <person name="Wilson R.K."/>
            <person name="McClelland M."/>
            <person name="Forsythe S.J."/>
        </authorList>
    </citation>
    <scope>NUCLEOTIDE SEQUENCE [LARGE SCALE GENOMIC DNA]</scope>
    <source>
        <strain>ATCC BAA-894</strain>
    </source>
</reference>
<protein>
    <recommendedName>
        <fullName evidence="1">Probable phosphoglycerate mutase GpmB</fullName>
        <ecNumber evidence="1">5.4.2.-</ecNumber>
    </recommendedName>
    <alternativeName>
        <fullName evidence="1">PGAM</fullName>
    </alternativeName>
    <alternativeName>
        <fullName evidence="1">Phosphoglyceromutase</fullName>
    </alternativeName>
</protein>
<sequence length="215" mass="23937">MLQVYLVRHGETQWNAERRIQGQSDSPLTEKGERQAMQVAQRAKALGITHIITSDLGRTQRTAEIIAQGCGCDVILDPRLRELDMGILERRHLDTLSEEEEGWRRQLVNGTPDGRIPQGESMQEVSERMHGALNACLDLPPGSRPLLVSHGMALGCLVSTILGLPAYAERRLRLRNCSISRVDYQQSPWLASGWVVETAGDVSHLDAPALDELQR</sequence>